<sequence length="117" mass="13016">MGWSCIILFLVATATGVHSQVQLQQPGAELVRPGSSVKLSCKASGYTFTSYWMDWVKQRPGQGLEWIGNIYPSDSETHYNQKFKDKATLTVDKSSSTAYMQLSSLTSEDSAVYYCAR</sequence>
<name>HVM05_MOUSE</name>
<keyword id="KW-0002">3D-structure</keyword>
<keyword id="KW-1064">Adaptive immunity</keyword>
<keyword id="KW-1015">Disulfide bond</keyword>
<keyword id="KW-0391">Immunity</keyword>
<keyword id="KW-1280">Immunoglobulin</keyword>
<keyword id="KW-1185">Reference proteome</keyword>
<keyword id="KW-0732">Signal</keyword>
<proteinExistence type="evidence at protein level"/>
<evidence type="ECO:0000255" key="1">
    <source>
        <dbReference type="PROSITE-ProRule" id="PRU00114"/>
    </source>
</evidence>
<evidence type="ECO:0007829" key="2">
    <source>
        <dbReference type="PDB" id="1A14"/>
    </source>
</evidence>
<reference key="1">
    <citation type="journal article" date="1981" name="Cell">
        <title>Heavy chain variable region contribution to the NPb family of antibodies: somatic mutation evident in a gamma 2a variable region.</title>
        <authorList>
            <person name="Bothwell A.L.M."/>
            <person name="Paskind M."/>
            <person name="Reth M."/>
            <person name="Imanishi-Kari T."/>
            <person name="Rajewsky K."/>
            <person name="Baltimore D."/>
        </authorList>
    </citation>
    <scope>NUCLEOTIDE SEQUENCE [GENOMIC DNA]</scope>
    <source>
        <strain>C57BL/6J</strain>
    </source>
</reference>
<protein>
    <recommendedName>
        <fullName>Ig heavy chain V region 3</fullName>
    </recommendedName>
</protein>
<organism>
    <name type="scientific">Mus musculus</name>
    <name type="common">Mouse</name>
    <dbReference type="NCBI Taxonomy" id="10090"/>
    <lineage>
        <taxon>Eukaryota</taxon>
        <taxon>Metazoa</taxon>
        <taxon>Chordata</taxon>
        <taxon>Craniata</taxon>
        <taxon>Vertebrata</taxon>
        <taxon>Euteleostomi</taxon>
        <taxon>Mammalia</taxon>
        <taxon>Eutheria</taxon>
        <taxon>Euarchontoglires</taxon>
        <taxon>Glires</taxon>
        <taxon>Rodentia</taxon>
        <taxon>Myomorpha</taxon>
        <taxon>Muroidea</taxon>
        <taxon>Muridae</taxon>
        <taxon>Murinae</taxon>
        <taxon>Mus</taxon>
        <taxon>Mus</taxon>
    </lineage>
</organism>
<feature type="signal peptide">
    <location>
        <begin position="1"/>
        <end position="19"/>
    </location>
</feature>
<feature type="chain" id="PRO_0000015218" description="Ig heavy chain V region 3">
    <location>
        <begin position="20"/>
        <end position="117"/>
    </location>
</feature>
<feature type="region of interest" description="Framework-1">
    <location>
        <begin position="20"/>
        <end position="49"/>
    </location>
</feature>
<feature type="region of interest" description="Complementarity-determining-1">
    <location>
        <begin position="50"/>
        <end position="54"/>
    </location>
</feature>
<feature type="region of interest" description="Framework-2">
    <location>
        <begin position="55"/>
        <end position="68"/>
    </location>
</feature>
<feature type="region of interest" description="Complementarity-determining-2">
    <location>
        <begin position="69"/>
        <end position="85"/>
    </location>
</feature>
<feature type="region of interest" description="Framework-3">
    <location>
        <begin position="86"/>
        <end position="117"/>
    </location>
</feature>
<feature type="disulfide bond" evidence="1">
    <location>
        <begin position="41"/>
        <end position="115"/>
    </location>
</feature>
<feature type="non-terminal residue">
    <location>
        <position position="117"/>
    </location>
</feature>
<feature type="strand" evidence="2">
    <location>
        <begin position="22"/>
        <end position="25"/>
    </location>
</feature>
<feature type="strand" evidence="2">
    <location>
        <begin position="38"/>
        <end position="46"/>
    </location>
</feature>
<feature type="helix" evidence="2">
    <location>
        <begin position="48"/>
        <end position="50"/>
    </location>
</feature>
<feature type="strand" evidence="2">
    <location>
        <begin position="53"/>
        <end position="59"/>
    </location>
</feature>
<feature type="turn" evidence="2">
    <location>
        <begin position="60"/>
        <end position="62"/>
    </location>
</feature>
<feature type="strand" evidence="2">
    <location>
        <begin position="63"/>
        <end position="70"/>
    </location>
</feature>
<feature type="turn" evidence="2">
    <location>
        <begin position="72"/>
        <end position="74"/>
    </location>
</feature>
<feature type="strand" evidence="2">
    <location>
        <begin position="77"/>
        <end position="79"/>
    </location>
</feature>
<feature type="helix" evidence="2">
    <location>
        <begin position="81"/>
        <end position="83"/>
    </location>
</feature>
<feature type="turn" evidence="2">
    <location>
        <begin position="84"/>
        <end position="86"/>
    </location>
</feature>
<feature type="strand" evidence="2">
    <location>
        <begin position="89"/>
        <end position="92"/>
    </location>
</feature>
<feature type="turn" evidence="2">
    <location>
        <begin position="93"/>
        <end position="96"/>
    </location>
</feature>
<feature type="strand" evidence="2">
    <location>
        <begin position="97"/>
        <end position="101"/>
    </location>
</feature>
<feature type="helix" evidence="2">
    <location>
        <begin position="107"/>
        <end position="109"/>
    </location>
</feature>
<feature type="strand" evidence="2">
    <location>
        <begin position="111"/>
        <end position="117"/>
    </location>
</feature>
<comment type="miscellaneous">
    <text>This germline gene belongs to a set of closely related genes that could encode V regions of NPb antibodies.</text>
</comment>
<accession>P01749</accession>
<gene>
    <name type="primary">Ighv1-61</name>
    <name type="synonym">Igh-VJ558</name>
</gene>
<dbReference type="EMBL" id="J00536">
    <property type="protein sequence ID" value="AAA38605.1"/>
    <property type="molecule type" value="Genomic_DNA"/>
</dbReference>
<dbReference type="PIR" id="A02031">
    <property type="entry name" value="HVMS3"/>
</dbReference>
<dbReference type="PIR" id="PH1163">
    <property type="entry name" value="PH1163"/>
</dbReference>
<dbReference type="PIR" id="PH1164">
    <property type="entry name" value="PH1164"/>
</dbReference>
<dbReference type="PDB" id="1A14">
    <property type="method" value="X-ray"/>
    <property type="resolution" value="2.50 A"/>
    <property type="chains" value="H=20-117"/>
</dbReference>
<dbReference type="PDBsum" id="1A14"/>
<dbReference type="EMDB" id="EMD-0894"/>
<dbReference type="EMDB" id="EMD-26668"/>
<dbReference type="EMDB" id="EMD-37291"/>
<dbReference type="SMR" id="P01749"/>
<dbReference type="FunCoup" id="P01749">
    <property type="interactions" value="585"/>
</dbReference>
<dbReference type="jPOST" id="P01749"/>
<dbReference type="PeptideAtlas" id="P01749"/>
<dbReference type="ProteomicsDB" id="266903"/>
<dbReference type="Ensembl" id="ENSMUST00000103531.4">
    <property type="protein sequence ID" value="ENSMUSP00000100312.4"/>
    <property type="gene ID" value="ENSMUSG00000094087.2"/>
</dbReference>
<dbReference type="AGR" id="MGI:4439824"/>
<dbReference type="MGI" id="MGI:4439824">
    <property type="gene designation" value="Ighv1-61"/>
</dbReference>
<dbReference type="VEuPathDB" id="HostDB:ENSMUSG00000094087"/>
<dbReference type="GeneTree" id="ENSGT00950000183013"/>
<dbReference type="HOGENOM" id="CLU_077975_5_2_1"/>
<dbReference type="InParanoid" id="P01749"/>
<dbReference type="OMA" id="GWIDAYY"/>
<dbReference type="OrthoDB" id="8865476at2759"/>
<dbReference type="PhylomeDB" id="P01749"/>
<dbReference type="TreeFam" id="TF352061"/>
<dbReference type="EvolutionaryTrace" id="P01749"/>
<dbReference type="PRO" id="PR:P01749"/>
<dbReference type="Proteomes" id="UP000000589">
    <property type="component" value="Chromosome 12"/>
</dbReference>
<dbReference type="RNAct" id="P01749">
    <property type="molecule type" value="protein"/>
</dbReference>
<dbReference type="Bgee" id="ENSMUSG00000094087">
    <property type="expression patterns" value="Expressed in jejunum and 24 other cell types or tissues"/>
</dbReference>
<dbReference type="GO" id="GO:0005576">
    <property type="term" value="C:extracellular region"/>
    <property type="evidence" value="ECO:0007669"/>
    <property type="project" value="UniProtKB-ARBA"/>
</dbReference>
<dbReference type="GO" id="GO:0019814">
    <property type="term" value="C:immunoglobulin complex"/>
    <property type="evidence" value="ECO:0007669"/>
    <property type="project" value="UniProtKB-KW"/>
</dbReference>
<dbReference type="GO" id="GO:0002250">
    <property type="term" value="P:adaptive immune response"/>
    <property type="evidence" value="ECO:0007669"/>
    <property type="project" value="UniProtKB-KW"/>
</dbReference>
<dbReference type="CDD" id="cd04981">
    <property type="entry name" value="IgV_H"/>
    <property type="match status" value="1"/>
</dbReference>
<dbReference type="FunFam" id="2.60.40.10:FF:001025">
    <property type="entry name" value="Immunoglobulin heavy variable V1-74"/>
    <property type="match status" value="1"/>
</dbReference>
<dbReference type="Gene3D" id="2.60.40.10">
    <property type="entry name" value="Immunoglobulins"/>
    <property type="match status" value="1"/>
</dbReference>
<dbReference type="InterPro" id="IPR007110">
    <property type="entry name" value="Ig-like_dom"/>
</dbReference>
<dbReference type="InterPro" id="IPR036179">
    <property type="entry name" value="Ig-like_dom_sf"/>
</dbReference>
<dbReference type="InterPro" id="IPR013783">
    <property type="entry name" value="Ig-like_fold"/>
</dbReference>
<dbReference type="InterPro" id="IPR013106">
    <property type="entry name" value="Ig_V-set"/>
</dbReference>
<dbReference type="InterPro" id="IPR050199">
    <property type="entry name" value="IgHV"/>
</dbReference>
<dbReference type="PANTHER" id="PTHR23266">
    <property type="entry name" value="IMMUNOGLOBULIN HEAVY CHAIN"/>
    <property type="match status" value="1"/>
</dbReference>
<dbReference type="Pfam" id="PF07686">
    <property type="entry name" value="V-set"/>
    <property type="match status" value="1"/>
</dbReference>
<dbReference type="SMART" id="SM00406">
    <property type="entry name" value="IGv"/>
    <property type="match status" value="1"/>
</dbReference>
<dbReference type="SUPFAM" id="SSF48726">
    <property type="entry name" value="Immunoglobulin"/>
    <property type="match status" value="1"/>
</dbReference>
<dbReference type="PROSITE" id="PS50835">
    <property type="entry name" value="IG_LIKE"/>
    <property type="match status" value="1"/>
</dbReference>